<proteinExistence type="evidence at protein level"/>
<gene>
    <name type="primary">sed1</name>
    <name type="synonym">sedA</name>
    <name type="ORF">AFUA_6G10250</name>
</gene>
<sequence length="644" mass="69963">MRLSHVLLGTAAAAGVLASPTPNDYVVHERRAVLPRSWTEEKRLDKASILPMRIGLTQSNLDRGHDLLMEISDPRSSRYGQHLSVEEVHSLFAPSQETVDRVRAWLESEGIAGDRISQSSNEQFLQFDASAAEVERLLGTEYYLYTHQGSGKSHIACREYHVPHSLQRHIDYITPGIKLLEVEGVKKARSIEKRSFRSPLPPILERLTLPLSELLGNTLLCDVAITPLCISALYNITRGSKATKGNELGIFEDLGDVYSQEDLNLFFSTFAQQIPQGTHPILKAVDGAQAPTSVTNAGPESDLDFQISYPIIWPQNSILFQTDDPNYTANYNFSGFLNTFLDAIDGSYCSEISPLDPPYPNPADGGYKGQLQCGVYQPPKVLSISYGGAEADLPIAYQRRQCAEWMKLGLQGVSVVVASGDSGVEGRNGDPTPTECLGTEGKVFAPDFPATCPYLTTVGGTYLPLGADPRKDEEVAVTSFPSGGGFSNIYERADYQQQAVEDYFSRADPGYPFYESVDNSSFAENGGIYNRIGRAYPDVAAIADNVVIFNKGMPTLIGGTSAAAPVFAAILTRINEERLAVGKSTVGFVNPVLYAHPEVFNDITQGSNPGCGMQGFSAATGWDPVTGLGTPNYPALLDLFMSLP</sequence>
<comment type="function">
    <text evidence="3">Secreted tripeptidyl-peptidase which degrades proteins at acidic pHs and is involved in virulence.</text>
</comment>
<comment type="catalytic activity">
    <reaction>
        <text>Release of an N-terminal tripeptide from a polypeptide.</text>
        <dbReference type="EC" id="3.4.14.10"/>
    </reaction>
</comment>
<comment type="cofactor">
    <cofactor evidence="1">
        <name>Ca(2+)</name>
        <dbReference type="ChEBI" id="CHEBI:29108"/>
    </cofactor>
    <text evidence="1">Binds 1 Ca(2+) ion per subunit.</text>
</comment>
<comment type="biophysicochemical properties">
    <phDependence>
        <text evidence="3">Optimum pH is about 5.5.</text>
    </phDependence>
</comment>
<comment type="subcellular location">
    <subcellularLocation>
        <location evidence="1">Secreted</location>
        <location evidence="1">Extracellular space</location>
    </subcellularLocation>
</comment>
<comment type="PTM">
    <text evidence="3">N-glycosylated.</text>
</comment>
<feature type="signal peptide" evidence="2">
    <location>
        <begin position="1"/>
        <end position="18"/>
    </location>
</feature>
<feature type="propeptide" id="PRO_0000390741" description="Removed in mature form" evidence="3">
    <location>
        <begin position="19"/>
        <end position="196"/>
    </location>
</feature>
<feature type="chain" id="PRO_5000072119" description="Tripeptidyl-peptidase sed1">
    <location>
        <begin position="197"/>
        <end position="644"/>
    </location>
</feature>
<feature type="domain" description="Peptidase S53">
    <location>
        <begin position="224"/>
        <end position="643"/>
    </location>
</feature>
<feature type="active site" description="Charge relay system" evidence="1">
    <location>
        <position position="300"/>
    </location>
</feature>
<feature type="active site" description="Charge relay system" evidence="1">
    <location>
        <position position="304"/>
    </location>
</feature>
<feature type="active site" description="Charge relay system" evidence="1">
    <location>
        <position position="561"/>
    </location>
</feature>
<feature type="binding site" evidence="1">
    <location>
        <position position="602"/>
    </location>
    <ligand>
        <name>Ca(2+)</name>
        <dbReference type="ChEBI" id="CHEBI:29108"/>
    </ligand>
</feature>
<feature type="binding site" evidence="1">
    <location>
        <position position="603"/>
    </location>
    <ligand>
        <name>Ca(2+)</name>
        <dbReference type="ChEBI" id="CHEBI:29108"/>
    </ligand>
</feature>
<feature type="binding site" evidence="1">
    <location>
        <position position="621"/>
    </location>
    <ligand>
        <name>Ca(2+)</name>
        <dbReference type="ChEBI" id="CHEBI:29108"/>
    </ligand>
</feature>
<feature type="binding site" evidence="1">
    <location>
        <position position="623"/>
    </location>
    <ligand>
        <name>Ca(2+)</name>
        <dbReference type="ChEBI" id="CHEBI:29108"/>
    </ligand>
</feature>
<feature type="glycosylation site" description="N-linked (GlcNAc...) asparagine" evidence="2">
    <location>
        <position position="235"/>
    </location>
</feature>
<feature type="glycosylation site" description="N-linked (GlcNAc...) asparagine" evidence="2">
    <location>
        <position position="326"/>
    </location>
</feature>
<feature type="glycosylation site" description="N-linked (GlcNAc...) asparagine" evidence="2">
    <location>
        <position position="332"/>
    </location>
</feature>
<feature type="glycosylation site" description="N-linked (GlcNAc...) asparagine" evidence="2">
    <location>
        <position position="519"/>
    </location>
</feature>
<accession>Q70DX9</accession>
<accession>Q4WMD8</accession>
<evidence type="ECO:0000250" key="1"/>
<evidence type="ECO:0000255" key="2"/>
<evidence type="ECO:0000269" key="3">
    <source>
    </source>
</evidence>
<keyword id="KW-0106">Calcium</keyword>
<keyword id="KW-0903">Direct protein sequencing</keyword>
<keyword id="KW-0325">Glycoprotein</keyword>
<keyword id="KW-0378">Hydrolase</keyword>
<keyword id="KW-0479">Metal-binding</keyword>
<keyword id="KW-0645">Protease</keyword>
<keyword id="KW-1185">Reference proteome</keyword>
<keyword id="KW-0964">Secreted</keyword>
<keyword id="KW-0720">Serine protease</keyword>
<keyword id="KW-0732">Signal</keyword>
<keyword id="KW-0843">Virulence</keyword>
<keyword id="KW-0865">Zymogen</keyword>
<name>SED1_ASPFU</name>
<protein>
    <recommendedName>
        <fullName>Tripeptidyl-peptidase sed1</fullName>
        <ecNumber>3.4.14.10</ecNumber>
    </recommendedName>
    <alternativeName>
        <fullName>Sedolisin-A</fullName>
    </alternativeName>
</protein>
<reference key="1">
    <citation type="journal article" date="2006" name="Appl. Environ. Microbiol.">
        <title>Sedolisins, a new class of secreted proteases from Aspergillus fumigatus with endoprotease or tripeptidyl-peptidase activity at acidic pHs.</title>
        <authorList>
            <person name="Reichard U."/>
            <person name="Lechenne B."/>
            <person name="Asif A.R."/>
            <person name="Streit F."/>
            <person name="Grouzmann E."/>
            <person name="Jousson O."/>
            <person name="Monod M."/>
        </authorList>
    </citation>
    <scope>NUCLEOTIDE SEQUENCE [MRNA]</scope>
    <scope>PROTEIN SEQUENCE OF N-TERMINUS</scope>
    <scope>GLYCOSYLATION</scope>
    <scope>FUNCTION</scope>
    <scope>BIOPHYSICOCHEMICAL PROPERTIES</scope>
    <source>
        <strain>D141</strain>
    </source>
</reference>
<reference key="2">
    <citation type="journal article" date="2005" name="Nature">
        <title>Genomic sequence of the pathogenic and allergenic filamentous fungus Aspergillus fumigatus.</title>
        <authorList>
            <person name="Nierman W.C."/>
            <person name="Pain A."/>
            <person name="Anderson M.J."/>
            <person name="Wortman J.R."/>
            <person name="Kim H.S."/>
            <person name="Arroyo J."/>
            <person name="Berriman M."/>
            <person name="Abe K."/>
            <person name="Archer D.B."/>
            <person name="Bermejo C."/>
            <person name="Bennett J.W."/>
            <person name="Bowyer P."/>
            <person name="Chen D."/>
            <person name="Collins M."/>
            <person name="Coulsen R."/>
            <person name="Davies R."/>
            <person name="Dyer P.S."/>
            <person name="Farman M.L."/>
            <person name="Fedorova N."/>
            <person name="Fedorova N.D."/>
            <person name="Feldblyum T.V."/>
            <person name="Fischer R."/>
            <person name="Fosker N."/>
            <person name="Fraser A."/>
            <person name="Garcia J.L."/>
            <person name="Garcia M.J."/>
            <person name="Goble A."/>
            <person name="Goldman G.H."/>
            <person name="Gomi K."/>
            <person name="Griffith-Jones S."/>
            <person name="Gwilliam R."/>
            <person name="Haas B.J."/>
            <person name="Haas H."/>
            <person name="Harris D.E."/>
            <person name="Horiuchi H."/>
            <person name="Huang J."/>
            <person name="Humphray S."/>
            <person name="Jimenez J."/>
            <person name="Keller N."/>
            <person name="Khouri H."/>
            <person name="Kitamoto K."/>
            <person name="Kobayashi T."/>
            <person name="Konzack S."/>
            <person name="Kulkarni R."/>
            <person name="Kumagai T."/>
            <person name="Lafton A."/>
            <person name="Latge J.-P."/>
            <person name="Li W."/>
            <person name="Lord A."/>
            <person name="Lu C."/>
            <person name="Majoros W.H."/>
            <person name="May G.S."/>
            <person name="Miller B.L."/>
            <person name="Mohamoud Y."/>
            <person name="Molina M."/>
            <person name="Monod M."/>
            <person name="Mouyna I."/>
            <person name="Mulligan S."/>
            <person name="Murphy L.D."/>
            <person name="O'Neil S."/>
            <person name="Paulsen I."/>
            <person name="Penalva M.A."/>
            <person name="Pertea M."/>
            <person name="Price C."/>
            <person name="Pritchard B.L."/>
            <person name="Quail M.A."/>
            <person name="Rabbinowitsch E."/>
            <person name="Rawlins N."/>
            <person name="Rajandream M.A."/>
            <person name="Reichard U."/>
            <person name="Renauld H."/>
            <person name="Robson G.D."/>
            <person name="Rodriguez de Cordoba S."/>
            <person name="Rodriguez-Pena J.M."/>
            <person name="Ronning C.M."/>
            <person name="Rutter S."/>
            <person name="Salzberg S.L."/>
            <person name="Sanchez M."/>
            <person name="Sanchez-Ferrero J.C."/>
            <person name="Saunders D."/>
            <person name="Seeger K."/>
            <person name="Squares R."/>
            <person name="Squares S."/>
            <person name="Takeuchi M."/>
            <person name="Tekaia F."/>
            <person name="Turner G."/>
            <person name="Vazquez de Aldana C.R."/>
            <person name="Weidman J."/>
            <person name="White O."/>
            <person name="Woodward J.R."/>
            <person name="Yu J.-H."/>
            <person name="Fraser C.M."/>
            <person name="Galagan J.E."/>
            <person name="Asai K."/>
            <person name="Machida M."/>
            <person name="Hall N."/>
            <person name="Barrell B.G."/>
            <person name="Denning D.W."/>
        </authorList>
    </citation>
    <scope>NUCLEOTIDE SEQUENCE [LARGE SCALE GENOMIC DNA]</scope>
    <source>
        <strain>ATCC MYA-4609 / CBS 101355 / FGSC A1100 / Af293</strain>
    </source>
</reference>
<dbReference type="EC" id="3.4.14.10"/>
<dbReference type="EMBL" id="AJ585109">
    <property type="protein sequence ID" value="CAE51075.1"/>
    <property type="molecule type" value="mRNA"/>
</dbReference>
<dbReference type="EMBL" id="AAHF01000006">
    <property type="protein sequence ID" value="EAL88876.1"/>
    <property type="molecule type" value="Genomic_DNA"/>
</dbReference>
<dbReference type="RefSeq" id="XP_750914.1">
    <property type="nucleotide sequence ID" value="XM_745821.1"/>
</dbReference>
<dbReference type="SMR" id="Q70DX9"/>
<dbReference type="STRING" id="330879.Q70DX9"/>
<dbReference type="MEROPS" id="S53.007"/>
<dbReference type="GlyCosmos" id="Q70DX9">
    <property type="glycosylation" value="4 sites, No reported glycans"/>
</dbReference>
<dbReference type="EnsemblFungi" id="EAL88876">
    <property type="protein sequence ID" value="EAL88876"/>
    <property type="gene ID" value="AFUA_6G10250"/>
</dbReference>
<dbReference type="GeneID" id="3508219"/>
<dbReference type="KEGG" id="afm:AFUA_6G10250"/>
<dbReference type="VEuPathDB" id="FungiDB:Afu6g10250"/>
<dbReference type="eggNOG" id="ENOG502QTN1">
    <property type="taxonomic scope" value="Eukaryota"/>
</dbReference>
<dbReference type="HOGENOM" id="CLU_013783_4_0_1"/>
<dbReference type="InParanoid" id="Q70DX9"/>
<dbReference type="OMA" id="ACREYHV"/>
<dbReference type="OrthoDB" id="409122at2759"/>
<dbReference type="Proteomes" id="UP000002530">
    <property type="component" value="Chromosome 6"/>
</dbReference>
<dbReference type="GO" id="GO:0005576">
    <property type="term" value="C:extracellular region"/>
    <property type="evidence" value="ECO:0007669"/>
    <property type="project" value="UniProtKB-SubCell"/>
</dbReference>
<dbReference type="GO" id="GO:0004175">
    <property type="term" value="F:endopeptidase activity"/>
    <property type="evidence" value="ECO:0000318"/>
    <property type="project" value="GO_Central"/>
</dbReference>
<dbReference type="GO" id="GO:0046872">
    <property type="term" value="F:metal ion binding"/>
    <property type="evidence" value="ECO:0007669"/>
    <property type="project" value="UniProtKB-KW"/>
</dbReference>
<dbReference type="GO" id="GO:0004252">
    <property type="term" value="F:serine-type endopeptidase activity"/>
    <property type="evidence" value="ECO:0007669"/>
    <property type="project" value="InterPro"/>
</dbReference>
<dbReference type="GO" id="GO:0008240">
    <property type="term" value="F:tripeptidyl-peptidase activity"/>
    <property type="evidence" value="ECO:0000318"/>
    <property type="project" value="GO_Central"/>
</dbReference>
<dbReference type="GO" id="GO:0006508">
    <property type="term" value="P:proteolysis"/>
    <property type="evidence" value="ECO:0000315"/>
    <property type="project" value="AspGD"/>
</dbReference>
<dbReference type="CDD" id="cd04056">
    <property type="entry name" value="Peptidases_S53"/>
    <property type="match status" value="1"/>
</dbReference>
<dbReference type="CDD" id="cd11377">
    <property type="entry name" value="Pro-peptidase_S53"/>
    <property type="match status" value="1"/>
</dbReference>
<dbReference type="FunFam" id="3.40.50.200:FF:000019">
    <property type="entry name" value="Protease S8 tripeptidyl peptidase I"/>
    <property type="match status" value="1"/>
</dbReference>
<dbReference type="Gene3D" id="3.40.50.200">
    <property type="entry name" value="Peptidase S8/S53 domain"/>
    <property type="match status" value="1"/>
</dbReference>
<dbReference type="InterPro" id="IPR036852">
    <property type="entry name" value="Peptidase_S8/S53_dom_sf"/>
</dbReference>
<dbReference type="InterPro" id="IPR015366">
    <property type="entry name" value="S53_propep"/>
</dbReference>
<dbReference type="InterPro" id="IPR030400">
    <property type="entry name" value="Sedolisin_dom"/>
</dbReference>
<dbReference type="InterPro" id="IPR050819">
    <property type="entry name" value="Tripeptidyl-peptidase_I"/>
</dbReference>
<dbReference type="PANTHER" id="PTHR14218">
    <property type="entry name" value="PROTEASE S8 TRIPEPTIDYL PEPTIDASE I CLN2"/>
    <property type="match status" value="1"/>
</dbReference>
<dbReference type="PANTHER" id="PTHR14218:SF19">
    <property type="entry name" value="SERINE PROTEASE AORO, PUTATIVE (AFU_ORTHOLOGUE AFUA_6G10250)-RELATED"/>
    <property type="match status" value="1"/>
</dbReference>
<dbReference type="Pfam" id="PF09286">
    <property type="entry name" value="Pro-kuma_activ"/>
    <property type="match status" value="1"/>
</dbReference>
<dbReference type="SMART" id="SM00944">
    <property type="entry name" value="Pro-kuma_activ"/>
    <property type="match status" value="1"/>
</dbReference>
<dbReference type="SUPFAM" id="SSF54897">
    <property type="entry name" value="Protease propeptides/inhibitors"/>
    <property type="match status" value="1"/>
</dbReference>
<dbReference type="SUPFAM" id="SSF52743">
    <property type="entry name" value="Subtilisin-like"/>
    <property type="match status" value="1"/>
</dbReference>
<dbReference type="PROSITE" id="PS51695">
    <property type="entry name" value="SEDOLISIN"/>
    <property type="match status" value="1"/>
</dbReference>
<organism>
    <name type="scientific">Aspergillus fumigatus (strain ATCC MYA-4609 / CBS 101355 / FGSC A1100 / Af293)</name>
    <name type="common">Neosartorya fumigata</name>
    <dbReference type="NCBI Taxonomy" id="330879"/>
    <lineage>
        <taxon>Eukaryota</taxon>
        <taxon>Fungi</taxon>
        <taxon>Dikarya</taxon>
        <taxon>Ascomycota</taxon>
        <taxon>Pezizomycotina</taxon>
        <taxon>Eurotiomycetes</taxon>
        <taxon>Eurotiomycetidae</taxon>
        <taxon>Eurotiales</taxon>
        <taxon>Aspergillaceae</taxon>
        <taxon>Aspergillus</taxon>
        <taxon>Aspergillus subgen. Fumigati</taxon>
    </lineage>
</organism>